<reference key="1">
    <citation type="journal article" date="2000" name="DNA Res.">
        <title>Structural analysis of Arabidopsis thaliana chromosome 3. I. Sequence features of the regions of 4,504,864 bp covered by sixty P1 and TAC clones.</title>
        <authorList>
            <person name="Sato S."/>
            <person name="Nakamura Y."/>
            <person name="Kaneko T."/>
            <person name="Katoh T."/>
            <person name="Asamizu E."/>
            <person name="Tabata S."/>
        </authorList>
    </citation>
    <scope>NUCLEOTIDE SEQUENCE [LARGE SCALE GENOMIC DNA]</scope>
    <source>
        <strain>cv. Columbia</strain>
    </source>
</reference>
<reference key="2">
    <citation type="journal article" date="2017" name="Plant J.">
        <title>Araport11: a complete reannotation of the Arabidopsis thaliana reference genome.</title>
        <authorList>
            <person name="Cheng C.Y."/>
            <person name="Krishnakumar V."/>
            <person name="Chan A.P."/>
            <person name="Thibaud-Nissen F."/>
            <person name="Schobel S."/>
            <person name="Town C.D."/>
        </authorList>
    </citation>
    <scope>GENOME REANNOTATION</scope>
    <source>
        <strain>cv. Columbia</strain>
    </source>
</reference>
<reference key="3">
    <citation type="journal article" date="2003" name="Science">
        <title>Empirical analysis of transcriptional activity in the Arabidopsis genome.</title>
        <authorList>
            <person name="Yamada K."/>
            <person name="Lim J."/>
            <person name="Dale J.M."/>
            <person name="Chen H."/>
            <person name="Shinn P."/>
            <person name="Palm C.J."/>
            <person name="Southwick A.M."/>
            <person name="Wu H.C."/>
            <person name="Kim C.J."/>
            <person name="Nguyen M."/>
            <person name="Pham P.K."/>
            <person name="Cheuk R.F."/>
            <person name="Karlin-Newmann G."/>
            <person name="Liu S.X."/>
            <person name="Lam B."/>
            <person name="Sakano H."/>
            <person name="Wu T."/>
            <person name="Yu G."/>
            <person name="Miranda M."/>
            <person name="Quach H.L."/>
            <person name="Tripp M."/>
            <person name="Chang C.H."/>
            <person name="Lee J.M."/>
            <person name="Toriumi M.J."/>
            <person name="Chan M.M."/>
            <person name="Tang C.C."/>
            <person name="Onodera C.S."/>
            <person name="Deng J.M."/>
            <person name="Akiyama K."/>
            <person name="Ansari Y."/>
            <person name="Arakawa T."/>
            <person name="Banh J."/>
            <person name="Banno F."/>
            <person name="Bowser L."/>
            <person name="Brooks S.Y."/>
            <person name="Carninci P."/>
            <person name="Chao Q."/>
            <person name="Choy N."/>
            <person name="Enju A."/>
            <person name="Goldsmith A.D."/>
            <person name="Gurjal M."/>
            <person name="Hansen N.F."/>
            <person name="Hayashizaki Y."/>
            <person name="Johnson-Hopson C."/>
            <person name="Hsuan V.W."/>
            <person name="Iida K."/>
            <person name="Karnes M."/>
            <person name="Khan S."/>
            <person name="Koesema E."/>
            <person name="Ishida J."/>
            <person name="Jiang P.X."/>
            <person name="Jones T."/>
            <person name="Kawai J."/>
            <person name="Kamiya A."/>
            <person name="Meyers C."/>
            <person name="Nakajima M."/>
            <person name="Narusaka M."/>
            <person name="Seki M."/>
            <person name="Sakurai T."/>
            <person name="Satou M."/>
            <person name="Tamse R."/>
            <person name="Vaysberg M."/>
            <person name="Wallender E.K."/>
            <person name="Wong C."/>
            <person name="Yamamura Y."/>
            <person name="Yuan S."/>
            <person name="Shinozaki K."/>
            <person name="Davis R.W."/>
            <person name="Theologis A."/>
            <person name="Ecker J.R."/>
        </authorList>
    </citation>
    <scope>NUCLEOTIDE SEQUENCE [LARGE SCALE MRNA] (ISOFORM 1)</scope>
    <source>
        <strain>cv. Columbia</strain>
    </source>
</reference>
<reference key="4">
    <citation type="journal article" date="2004" name="Plant Physiol.">
        <title>Genome-wide ORFeome cloning and analysis of Arabidopsis transcription factor genes.</title>
        <authorList>
            <person name="Gong W."/>
            <person name="Shen Y.-P."/>
            <person name="Ma L.-G."/>
            <person name="Pan Y."/>
            <person name="Du Y.-L."/>
            <person name="Wang D.-H."/>
            <person name="Yang J.-Y."/>
            <person name="Hu L.-D."/>
            <person name="Liu X.-F."/>
            <person name="Dong C.-X."/>
            <person name="Ma L."/>
            <person name="Chen Y.-H."/>
            <person name="Yang X.-Y."/>
            <person name="Gao Y."/>
            <person name="Zhu D."/>
            <person name="Tan X."/>
            <person name="Mu J.-Y."/>
            <person name="Zhang D.-B."/>
            <person name="Liu Y.-L."/>
            <person name="Dinesh-Kumar S.P."/>
            <person name="Li Y."/>
            <person name="Wang X.-P."/>
            <person name="Gu H.-Y."/>
            <person name="Qu L.-J."/>
            <person name="Bai S.-N."/>
            <person name="Lu Y.-T."/>
            <person name="Li J.-Y."/>
            <person name="Zhao J.-D."/>
            <person name="Zuo J."/>
            <person name="Huang H."/>
            <person name="Deng X.-W."/>
            <person name="Zhu Y.-X."/>
        </authorList>
    </citation>
    <scope>NUCLEOTIDE SEQUENCE [LARGE SCALE MRNA] (ISOFORM 1)</scope>
</reference>
<reference key="5">
    <citation type="journal article" date="2006" name="BMC Genomics">
        <title>The maize INDETERMINATE1 flowering time regulator defines a highly conserved zinc finger protein family in higher plants.</title>
        <authorList>
            <person name="Colasanti J."/>
            <person name="Tremblay R."/>
            <person name="Wong A.Y."/>
            <person name="Coneva V."/>
            <person name="Kozaki A."/>
            <person name="Mable B.K."/>
        </authorList>
    </citation>
    <scope>GENE FAMILY</scope>
    <scope>NOMENCLATURE</scope>
</reference>
<gene>
    <name evidence="6" type="primary">IDD11</name>
    <name evidence="8" type="ordered locus">At3g13810</name>
    <name evidence="9" type="ORF">MCP4.2</name>
</gene>
<accession>Q9LRW7</accession>
<accession>F4JEJ5</accession>
<accession>F4JEJ6</accession>
<accession>Q700C1</accession>
<comment type="function">
    <text evidence="7">Probable transcription factor.</text>
</comment>
<comment type="subcellular location">
    <subcellularLocation>
        <location evidence="4">Nucleus</location>
    </subcellularLocation>
</comment>
<comment type="alternative products">
    <event type="alternative splicing"/>
    <isoform>
        <id>Q9LRW7-1</id>
        <name>1</name>
        <sequence type="displayed"/>
    </isoform>
    <isoform>
        <id>Q9LRW7-2</id>
        <name>2</name>
        <sequence type="described" ref="VSP_057330 VSP_057331"/>
    </isoform>
    <isoform>
        <id>Q9LRW7-3</id>
        <name>3</name>
        <sequence type="described" ref="VSP_057329 VSP_057331"/>
    </isoform>
</comment>
<sequence>MMNKDMLLHQHQQPQQDENMSNLTSASGDQASVSSGNITEASGSNYFPHHQQQQEQQQQQLVVPDSQTQKKRRNQPGNPDPESEVIALSPKTLMATNRFVCEICNKGFQRDQNLQLHRRGHNLPWKLKQRSNKEVIRKKVYVCPEASCVHHDPSRALGDLTGIKKHFCRKHGEKKWKCDKCSKKYAVQSDCKAHSKTCGTKEYRCDCGTLFSRRDSFITHRAFCEALAEETAREVVIPQNQNNNQPNPLLIHQSASHPHHHHQTQPTINVSSSSSSSHNHNIINSLHFDTNNGNTNNSNNSNNHLHTFPMKKEQQSNDHIMNYHHSIIPPWLAPQPHALTSSNPNPSNGGGGGGSLFSLASPAMSATALLQKAAQMGSTKTPPLPPTTAYERSTHNNNLTTTMAAMMTSPSGFISSNNNNHVLFQDYNASGFDNHGREEAFDDTFGGFLRTNEVTAAAGSEKSTKSGGGEGLTRDFLGLRPLMSHNEILSFAGLGSCINSSASDQLHPKPWQG</sequence>
<proteinExistence type="evidence at transcript level"/>
<name>IDD11_ARATH</name>
<feature type="chain" id="PRO_0000431545" description="Protein indeterminate-domain 11">
    <location>
        <begin position="1"/>
        <end position="513"/>
    </location>
</feature>
<feature type="zinc finger region" description="C2H2-type 1" evidence="3">
    <location>
        <begin position="99"/>
        <end position="121"/>
    </location>
</feature>
<feature type="zinc finger region" description="C2H2-type 2" evidence="7">
    <location>
        <begin position="141"/>
        <end position="171"/>
    </location>
</feature>
<feature type="zinc finger region" description="C2H2-type 2; degenerate" evidence="3">
    <location>
        <begin position="176"/>
        <end position="199"/>
    </location>
</feature>
<feature type="zinc finger region" description="CCHC-type 2; atypical" evidence="7">
    <location>
        <begin position="203"/>
        <end position="226"/>
    </location>
</feature>
<feature type="region of interest" description="Disordered" evidence="5">
    <location>
        <begin position="1"/>
        <end position="84"/>
    </location>
</feature>
<feature type="region of interest" description="SHR-binding" evidence="1">
    <location>
        <begin position="213"/>
        <end position="225"/>
    </location>
</feature>
<feature type="region of interest" description="Disordered" evidence="5">
    <location>
        <begin position="255"/>
        <end position="280"/>
    </location>
</feature>
<feature type="region of interest" description="Disordered" evidence="5">
    <location>
        <begin position="334"/>
        <end position="358"/>
    </location>
</feature>
<feature type="short sequence motif" description="Nuclear localization signal" evidence="4">
    <location>
        <begin position="163"/>
        <end position="170"/>
    </location>
</feature>
<feature type="compositionally biased region" description="Polar residues" evidence="5">
    <location>
        <begin position="10"/>
        <end position="45"/>
    </location>
</feature>
<feature type="compositionally biased region" description="Low complexity" evidence="5">
    <location>
        <begin position="51"/>
        <end position="60"/>
    </location>
</feature>
<feature type="compositionally biased region" description="Low complexity" evidence="5">
    <location>
        <begin position="264"/>
        <end position="280"/>
    </location>
</feature>
<feature type="binding site" evidence="1">
    <location>
        <position position="178"/>
    </location>
    <ligand>
        <name>Zn(2+)</name>
        <dbReference type="ChEBI" id="CHEBI:29105"/>
        <label>1</label>
    </ligand>
</feature>
<feature type="binding site" evidence="1">
    <location>
        <position position="181"/>
    </location>
    <ligand>
        <name>Zn(2+)</name>
        <dbReference type="ChEBI" id="CHEBI:29105"/>
        <label>1</label>
    </ligand>
</feature>
<feature type="binding site" evidence="1">
    <location>
        <position position="194"/>
    </location>
    <ligand>
        <name>Zn(2+)</name>
        <dbReference type="ChEBI" id="CHEBI:29105"/>
        <label>1</label>
    </ligand>
</feature>
<feature type="binding site" evidence="1">
    <location>
        <position position="198"/>
    </location>
    <ligand>
        <name>Zn(2+)</name>
        <dbReference type="ChEBI" id="CHEBI:29105"/>
        <label>1</label>
    </ligand>
</feature>
<feature type="binding site" evidence="1">
    <location>
        <position position="205"/>
    </location>
    <ligand>
        <name>Zn(2+)</name>
        <dbReference type="ChEBI" id="CHEBI:29105"/>
        <label>2</label>
    </ligand>
</feature>
<feature type="binding site" evidence="1">
    <location>
        <position position="207"/>
    </location>
    <ligand>
        <name>Zn(2+)</name>
        <dbReference type="ChEBI" id="CHEBI:29105"/>
        <label>2</label>
    </ligand>
</feature>
<feature type="binding site" evidence="1">
    <location>
        <position position="220"/>
    </location>
    <ligand>
        <name>Zn(2+)</name>
        <dbReference type="ChEBI" id="CHEBI:29105"/>
        <label>2</label>
    </ligand>
</feature>
<feature type="binding site" evidence="1">
    <location>
        <position position="224"/>
    </location>
    <ligand>
        <name>Zn(2+)</name>
        <dbReference type="ChEBI" id="CHEBI:29105"/>
        <label>2</label>
    </ligand>
</feature>
<feature type="modified residue" description="Phosphoserine" evidence="2">
    <location>
        <position position="89"/>
    </location>
</feature>
<feature type="splice variant" id="VSP_057329" description="In isoform 3.">
    <location>
        <begin position="1"/>
        <end position="19"/>
    </location>
</feature>
<feature type="splice variant" id="VSP_057330" description="In isoform 2.">
    <location>
        <begin position="1"/>
        <end position="5"/>
    </location>
</feature>
<feature type="splice variant" id="VSP_057331" description="In isoform 2 and isoform 3.">
    <original>LVVPDSQTQKKRRNQPGNPD</original>
    <variation>IQKLSCSWTDSLFQLFDTVTFLEILY</variation>
    <location>
        <begin position="61"/>
        <end position="80"/>
    </location>
</feature>
<feature type="sequence conflict" description="In Ref. 4; AAS79563/CAG25877." evidence="7" ref="4">
    <original>LV</original>
    <variation>RQQLF</variation>
    <location>
        <begin position="61"/>
        <end position="62"/>
    </location>
</feature>
<feature type="sequence conflict" description="In Ref. 4; AAS79563/CAG25877." evidence="7" ref="4">
    <original>T</original>
    <variation>P</variation>
    <location>
        <position position="68"/>
    </location>
</feature>
<feature type="sequence conflict" description="In Ref. 4; AAS79563/CAG25877." evidence="7" ref="4">
    <original>R</original>
    <variation>G</variation>
    <location>
        <position position="437"/>
    </location>
</feature>
<keyword id="KW-0025">Alternative splicing</keyword>
<keyword id="KW-0238">DNA-binding</keyword>
<keyword id="KW-0479">Metal-binding</keyword>
<keyword id="KW-0539">Nucleus</keyword>
<keyword id="KW-0597">Phosphoprotein</keyword>
<keyword id="KW-1185">Reference proteome</keyword>
<keyword id="KW-0677">Repeat</keyword>
<keyword id="KW-0804">Transcription</keyword>
<keyword id="KW-0805">Transcription regulation</keyword>
<keyword id="KW-0862">Zinc</keyword>
<keyword id="KW-0863">Zinc-finger</keyword>
<dbReference type="EMBL" id="AB028610">
    <property type="protein sequence ID" value="BAB02904.1"/>
    <property type="molecule type" value="Genomic_DNA"/>
</dbReference>
<dbReference type="EMBL" id="CP002686">
    <property type="protein sequence ID" value="AEE75418.1"/>
    <property type="molecule type" value="Genomic_DNA"/>
</dbReference>
<dbReference type="EMBL" id="CP002686">
    <property type="protein sequence ID" value="AEE75419.1"/>
    <property type="molecule type" value="Genomic_DNA"/>
</dbReference>
<dbReference type="EMBL" id="CP002686">
    <property type="protein sequence ID" value="AEE75420.1"/>
    <property type="molecule type" value="Genomic_DNA"/>
</dbReference>
<dbReference type="EMBL" id="CP002686">
    <property type="protein sequence ID" value="ANM65023.1"/>
    <property type="molecule type" value="Genomic_DNA"/>
</dbReference>
<dbReference type="EMBL" id="AF361797">
    <property type="protein sequence ID" value="AAK32810.1"/>
    <property type="molecule type" value="mRNA"/>
</dbReference>
<dbReference type="EMBL" id="AY091693">
    <property type="protein sequence ID" value="AAM10292.1"/>
    <property type="molecule type" value="mRNA"/>
</dbReference>
<dbReference type="EMBL" id="AY568673">
    <property type="protein sequence ID" value="AAS79563.1"/>
    <property type="molecule type" value="mRNA"/>
</dbReference>
<dbReference type="EMBL" id="AJ630504">
    <property type="protein sequence ID" value="CAG25877.1"/>
    <property type="molecule type" value="mRNA"/>
</dbReference>
<dbReference type="RefSeq" id="NP_001189882.1">
    <molecule id="Q9LRW7-2"/>
    <property type="nucleotide sequence ID" value="NM_001202953.1"/>
</dbReference>
<dbReference type="RefSeq" id="NP_001189883.1">
    <molecule id="Q9LRW7-3"/>
    <property type="nucleotide sequence ID" value="NM_001202954.1"/>
</dbReference>
<dbReference type="RefSeq" id="NP_001327022.1">
    <molecule id="Q9LRW7-1"/>
    <property type="nucleotide sequence ID" value="NM_001338084.1"/>
</dbReference>
<dbReference type="RefSeq" id="NP_187997.1">
    <molecule id="Q9LRW7-1"/>
    <property type="nucleotide sequence ID" value="NM_112234.3"/>
</dbReference>
<dbReference type="FunCoup" id="Q9LRW7">
    <property type="interactions" value="219"/>
</dbReference>
<dbReference type="STRING" id="3702.Q9LRW7"/>
<dbReference type="GlyGen" id="Q9LRW7">
    <property type="glycosylation" value="1 site, 1 O-linked glycan (1 site)"/>
</dbReference>
<dbReference type="iPTMnet" id="Q9LRW7"/>
<dbReference type="PaxDb" id="3702-AT3G13810.2"/>
<dbReference type="ProteomicsDB" id="228776">
    <molecule id="Q9LRW7-1"/>
</dbReference>
<dbReference type="EnsemblPlants" id="AT3G13810.1">
    <molecule id="Q9LRW7-1"/>
    <property type="protein sequence ID" value="AT3G13810.1"/>
    <property type="gene ID" value="AT3G13810"/>
</dbReference>
<dbReference type="EnsemblPlants" id="AT3G13810.2">
    <molecule id="Q9LRW7-2"/>
    <property type="protein sequence ID" value="AT3G13810.2"/>
    <property type="gene ID" value="AT3G13810"/>
</dbReference>
<dbReference type="EnsemblPlants" id="AT3G13810.3">
    <molecule id="Q9LRW7-3"/>
    <property type="protein sequence ID" value="AT3G13810.3"/>
    <property type="gene ID" value="AT3G13810"/>
</dbReference>
<dbReference type="EnsemblPlants" id="AT3G13810.4">
    <molecule id="Q9LRW7-1"/>
    <property type="protein sequence ID" value="AT3G13810.4"/>
    <property type="gene ID" value="AT3G13810"/>
</dbReference>
<dbReference type="GeneID" id="820593"/>
<dbReference type="Gramene" id="AT3G13810.1">
    <molecule id="Q9LRW7-1"/>
    <property type="protein sequence ID" value="AT3G13810.1"/>
    <property type="gene ID" value="AT3G13810"/>
</dbReference>
<dbReference type="Gramene" id="AT3G13810.2">
    <molecule id="Q9LRW7-2"/>
    <property type="protein sequence ID" value="AT3G13810.2"/>
    <property type="gene ID" value="AT3G13810"/>
</dbReference>
<dbReference type="Gramene" id="AT3G13810.3">
    <molecule id="Q9LRW7-3"/>
    <property type="protein sequence ID" value="AT3G13810.3"/>
    <property type="gene ID" value="AT3G13810"/>
</dbReference>
<dbReference type="Gramene" id="AT3G13810.4">
    <molecule id="Q9LRW7-1"/>
    <property type="protein sequence ID" value="AT3G13810.4"/>
    <property type="gene ID" value="AT3G13810"/>
</dbReference>
<dbReference type="KEGG" id="ath:AT3G13810"/>
<dbReference type="Araport" id="AT3G13810"/>
<dbReference type="TAIR" id="AT3G13810">
    <property type="gene designation" value="IDD11"/>
</dbReference>
<dbReference type="eggNOG" id="KOG1721">
    <property type="taxonomic scope" value="Eukaryota"/>
</dbReference>
<dbReference type="HOGENOM" id="CLU_014578_4_1_1"/>
<dbReference type="InParanoid" id="Q9LRW7"/>
<dbReference type="PhylomeDB" id="Q9LRW7"/>
<dbReference type="PRO" id="PR:Q9LRW7"/>
<dbReference type="Proteomes" id="UP000006548">
    <property type="component" value="Chromosome 3"/>
</dbReference>
<dbReference type="ExpressionAtlas" id="Q9LRW7">
    <property type="expression patterns" value="baseline and differential"/>
</dbReference>
<dbReference type="GO" id="GO:0005634">
    <property type="term" value="C:nucleus"/>
    <property type="evidence" value="ECO:0007669"/>
    <property type="project" value="UniProtKB-SubCell"/>
</dbReference>
<dbReference type="GO" id="GO:0003677">
    <property type="term" value="F:DNA binding"/>
    <property type="evidence" value="ECO:0007669"/>
    <property type="project" value="UniProtKB-KW"/>
</dbReference>
<dbReference type="GO" id="GO:0003700">
    <property type="term" value="F:DNA-binding transcription factor activity"/>
    <property type="evidence" value="ECO:0000250"/>
    <property type="project" value="TAIR"/>
</dbReference>
<dbReference type="GO" id="GO:0008270">
    <property type="term" value="F:zinc ion binding"/>
    <property type="evidence" value="ECO:0007669"/>
    <property type="project" value="UniProtKB-KW"/>
</dbReference>
<dbReference type="GO" id="GO:0006355">
    <property type="term" value="P:regulation of DNA-templated transcription"/>
    <property type="evidence" value="ECO:0000304"/>
    <property type="project" value="TAIR"/>
</dbReference>
<dbReference type="FunFam" id="3.30.160.60:FF:000554">
    <property type="entry name" value="protein indeterminate-domain 12-like"/>
    <property type="match status" value="1"/>
</dbReference>
<dbReference type="FunFam" id="3.30.160.60:FF:000131">
    <property type="entry name" value="protein indeterminate-domain 5, chloroplastic-like"/>
    <property type="match status" value="1"/>
</dbReference>
<dbReference type="Gene3D" id="3.30.160.60">
    <property type="entry name" value="Classic Zinc Finger"/>
    <property type="match status" value="2"/>
</dbReference>
<dbReference type="InterPro" id="IPR055187">
    <property type="entry name" value="C2CH-3rd_BIRD-IDD"/>
</dbReference>
<dbReference type="InterPro" id="IPR055185">
    <property type="entry name" value="C2CH-4th_BIRD-IDD"/>
</dbReference>
<dbReference type="InterPro" id="IPR055186">
    <property type="entry name" value="C2H2-2nd_BIRD-IDD"/>
</dbReference>
<dbReference type="InterPro" id="IPR031140">
    <property type="entry name" value="IDD1-16"/>
</dbReference>
<dbReference type="InterPro" id="IPR036236">
    <property type="entry name" value="Znf_C2H2_sf"/>
</dbReference>
<dbReference type="InterPro" id="IPR013087">
    <property type="entry name" value="Znf_C2H2_type"/>
</dbReference>
<dbReference type="PANTHER" id="PTHR10593:SF236">
    <property type="entry name" value="PROTEIN INDETERMINATE-DOMAIN 11"/>
    <property type="match status" value="1"/>
</dbReference>
<dbReference type="PANTHER" id="PTHR10593">
    <property type="entry name" value="SERINE/THREONINE-PROTEIN KINASE RIO"/>
    <property type="match status" value="1"/>
</dbReference>
<dbReference type="Pfam" id="PF22995">
    <property type="entry name" value="C2CH-3rd_BIRD-IDD"/>
    <property type="match status" value="1"/>
</dbReference>
<dbReference type="Pfam" id="PF22992">
    <property type="entry name" value="C2CH-4th_BIRD-IDD"/>
    <property type="match status" value="1"/>
</dbReference>
<dbReference type="Pfam" id="PF22996">
    <property type="entry name" value="C2H2-2nd_BIRD-IDD"/>
    <property type="match status" value="1"/>
</dbReference>
<dbReference type="Pfam" id="PF12874">
    <property type="entry name" value="zf-met"/>
    <property type="match status" value="1"/>
</dbReference>
<dbReference type="SMART" id="SM00355">
    <property type="entry name" value="ZnF_C2H2"/>
    <property type="match status" value="3"/>
</dbReference>
<dbReference type="SUPFAM" id="SSF57667">
    <property type="entry name" value="beta-beta-alpha zinc fingers"/>
    <property type="match status" value="1"/>
</dbReference>
<dbReference type="PROSITE" id="PS00028">
    <property type="entry name" value="ZINC_FINGER_C2H2_1"/>
    <property type="match status" value="1"/>
</dbReference>
<dbReference type="PROSITE" id="PS50157">
    <property type="entry name" value="ZINC_FINGER_C2H2_2"/>
    <property type="match status" value="1"/>
</dbReference>
<protein>
    <recommendedName>
        <fullName evidence="6">Protein indeterminate-domain 11</fullName>
    </recommendedName>
</protein>
<evidence type="ECO:0000250" key="1">
    <source>
        <dbReference type="UniProtKB" id="Q700D2"/>
    </source>
</evidence>
<evidence type="ECO:0000250" key="2">
    <source>
        <dbReference type="UniProtKB" id="Q8GYC1"/>
    </source>
</evidence>
<evidence type="ECO:0000255" key="3">
    <source>
        <dbReference type="PROSITE-ProRule" id="PRU00042"/>
    </source>
</evidence>
<evidence type="ECO:0000255" key="4">
    <source>
        <dbReference type="PROSITE-ProRule" id="PRU00768"/>
    </source>
</evidence>
<evidence type="ECO:0000256" key="5">
    <source>
        <dbReference type="SAM" id="MobiDB-lite"/>
    </source>
</evidence>
<evidence type="ECO:0000303" key="6">
    <source>
    </source>
</evidence>
<evidence type="ECO:0000305" key="7"/>
<evidence type="ECO:0000312" key="8">
    <source>
        <dbReference type="Araport" id="AT3G13810"/>
    </source>
</evidence>
<evidence type="ECO:0000312" key="9">
    <source>
        <dbReference type="EMBL" id="BAB02904.1"/>
    </source>
</evidence>
<organism>
    <name type="scientific">Arabidopsis thaliana</name>
    <name type="common">Mouse-ear cress</name>
    <dbReference type="NCBI Taxonomy" id="3702"/>
    <lineage>
        <taxon>Eukaryota</taxon>
        <taxon>Viridiplantae</taxon>
        <taxon>Streptophyta</taxon>
        <taxon>Embryophyta</taxon>
        <taxon>Tracheophyta</taxon>
        <taxon>Spermatophyta</taxon>
        <taxon>Magnoliopsida</taxon>
        <taxon>eudicotyledons</taxon>
        <taxon>Gunneridae</taxon>
        <taxon>Pentapetalae</taxon>
        <taxon>rosids</taxon>
        <taxon>malvids</taxon>
        <taxon>Brassicales</taxon>
        <taxon>Brassicaceae</taxon>
        <taxon>Camelineae</taxon>
        <taxon>Arabidopsis</taxon>
    </lineage>
</organism>